<name>SSRP_BURCM</name>
<dbReference type="EMBL" id="CP000440">
    <property type="protein sequence ID" value="ABI87588.1"/>
    <property type="molecule type" value="Genomic_DNA"/>
</dbReference>
<dbReference type="RefSeq" id="WP_011657271.1">
    <property type="nucleotide sequence ID" value="NC_008390.1"/>
</dbReference>
<dbReference type="SMR" id="Q0BE35"/>
<dbReference type="GeneID" id="93085769"/>
<dbReference type="KEGG" id="bam:Bamb_2032"/>
<dbReference type="PATRIC" id="fig|339670.21.peg.2912"/>
<dbReference type="eggNOG" id="COG0691">
    <property type="taxonomic scope" value="Bacteria"/>
</dbReference>
<dbReference type="Proteomes" id="UP000000662">
    <property type="component" value="Chromosome 1"/>
</dbReference>
<dbReference type="GO" id="GO:0005829">
    <property type="term" value="C:cytosol"/>
    <property type="evidence" value="ECO:0007669"/>
    <property type="project" value="TreeGrafter"/>
</dbReference>
<dbReference type="GO" id="GO:0003723">
    <property type="term" value="F:RNA binding"/>
    <property type="evidence" value="ECO:0007669"/>
    <property type="project" value="UniProtKB-UniRule"/>
</dbReference>
<dbReference type="GO" id="GO:0070929">
    <property type="term" value="P:trans-translation"/>
    <property type="evidence" value="ECO:0007669"/>
    <property type="project" value="UniProtKB-UniRule"/>
</dbReference>
<dbReference type="CDD" id="cd09294">
    <property type="entry name" value="SmpB"/>
    <property type="match status" value="1"/>
</dbReference>
<dbReference type="Gene3D" id="2.40.280.10">
    <property type="match status" value="1"/>
</dbReference>
<dbReference type="HAMAP" id="MF_00023">
    <property type="entry name" value="SmpB"/>
    <property type="match status" value="1"/>
</dbReference>
<dbReference type="InterPro" id="IPR023620">
    <property type="entry name" value="SmpB"/>
</dbReference>
<dbReference type="InterPro" id="IPR000037">
    <property type="entry name" value="SsrA-bd_prot"/>
</dbReference>
<dbReference type="InterPro" id="IPR020081">
    <property type="entry name" value="SsrA-bd_prot_CS"/>
</dbReference>
<dbReference type="NCBIfam" id="NF003843">
    <property type="entry name" value="PRK05422.1"/>
    <property type="match status" value="1"/>
</dbReference>
<dbReference type="NCBIfam" id="TIGR00086">
    <property type="entry name" value="smpB"/>
    <property type="match status" value="1"/>
</dbReference>
<dbReference type="PANTHER" id="PTHR30308:SF2">
    <property type="entry name" value="SSRA-BINDING PROTEIN"/>
    <property type="match status" value="1"/>
</dbReference>
<dbReference type="PANTHER" id="PTHR30308">
    <property type="entry name" value="TMRNA-BINDING COMPONENT OF TRANS-TRANSLATION TAGGING COMPLEX"/>
    <property type="match status" value="1"/>
</dbReference>
<dbReference type="Pfam" id="PF01668">
    <property type="entry name" value="SmpB"/>
    <property type="match status" value="1"/>
</dbReference>
<dbReference type="SUPFAM" id="SSF74982">
    <property type="entry name" value="Small protein B (SmpB)"/>
    <property type="match status" value="1"/>
</dbReference>
<dbReference type="PROSITE" id="PS01317">
    <property type="entry name" value="SSRP"/>
    <property type="match status" value="1"/>
</dbReference>
<organism>
    <name type="scientific">Burkholderia ambifaria (strain ATCC BAA-244 / DSM 16087 / CCUG 44356 / LMG 19182 / AMMD)</name>
    <name type="common">Burkholderia cepacia (strain AMMD)</name>
    <dbReference type="NCBI Taxonomy" id="339670"/>
    <lineage>
        <taxon>Bacteria</taxon>
        <taxon>Pseudomonadati</taxon>
        <taxon>Pseudomonadota</taxon>
        <taxon>Betaproteobacteria</taxon>
        <taxon>Burkholderiales</taxon>
        <taxon>Burkholderiaceae</taxon>
        <taxon>Burkholderia</taxon>
        <taxon>Burkholderia cepacia complex</taxon>
    </lineage>
</organism>
<comment type="function">
    <text evidence="1">Required for rescue of stalled ribosomes mediated by trans-translation. Binds to transfer-messenger RNA (tmRNA), required for stable association of tmRNA with ribosomes. tmRNA and SmpB together mimic tRNA shape, replacing the anticodon stem-loop with SmpB. tmRNA is encoded by the ssrA gene; the 2 termini fold to resemble tRNA(Ala) and it encodes a 'tag peptide', a short internal open reading frame. During trans-translation Ala-aminoacylated tmRNA acts like a tRNA, entering the A-site of stalled ribosomes, displacing the stalled mRNA. The ribosome then switches to translate the ORF on the tmRNA; the nascent peptide is terminated with the 'tag peptide' encoded by the tmRNA and targeted for degradation. The ribosome is freed to recommence translation, which seems to be the essential function of trans-translation.</text>
</comment>
<comment type="subcellular location">
    <subcellularLocation>
        <location evidence="1">Cytoplasm</location>
    </subcellularLocation>
    <text evidence="1">The tmRNA-SmpB complex associates with stalled 70S ribosomes.</text>
</comment>
<comment type="similarity">
    <text evidence="1">Belongs to the SmpB family.</text>
</comment>
<keyword id="KW-0963">Cytoplasm</keyword>
<keyword id="KW-0694">RNA-binding</keyword>
<sequence length="148" mass="17194">MSIIDNRKAHFDYHIEERYEAGLVLEGWEVKALRAGRGQIKEGYVVVKNAEIFLIGTHISPLPEASTHIHPDPVRTRKLLLHREEIKKLIGKVEQRGYTLVPLNFHYKGGRVKCDIALAKGKKLHDKRETEKKRHWEREKARIMRAGT</sequence>
<proteinExistence type="inferred from homology"/>
<feature type="chain" id="PRO_1000002012" description="SsrA-binding protein">
    <location>
        <begin position="1"/>
        <end position="148"/>
    </location>
</feature>
<gene>
    <name evidence="1" type="primary">smpB</name>
    <name type="ordered locus">Bamb_2032</name>
</gene>
<protein>
    <recommendedName>
        <fullName evidence="1">SsrA-binding protein</fullName>
    </recommendedName>
    <alternativeName>
        <fullName evidence="1">Small protein B</fullName>
    </alternativeName>
</protein>
<accession>Q0BE35</accession>
<evidence type="ECO:0000255" key="1">
    <source>
        <dbReference type="HAMAP-Rule" id="MF_00023"/>
    </source>
</evidence>
<reference key="1">
    <citation type="submission" date="2006-08" db="EMBL/GenBank/DDBJ databases">
        <title>Complete sequence of chromosome 1 of Burkholderia cepacia AMMD.</title>
        <authorList>
            <person name="Copeland A."/>
            <person name="Lucas S."/>
            <person name="Lapidus A."/>
            <person name="Barry K."/>
            <person name="Detter J.C."/>
            <person name="Glavina del Rio T."/>
            <person name="Hammon N."/>
            <person name="Israni S."/>
            <person name="Pitluck S."/>
            <person name="Bruce D."/>
            <person name="Chain P."/>
            <person name="Malfatti S."/>
            <person name="Shin M."/>
            <person name="Vergez L."/>
            <person name="Schmutz J."/>
            <person name="Larimer F."/>
            <person name="Land M."/>
            <person name="Hauser L."/>
            <person name="Kyrpides N."/>
            <person name="Kim E."/>
            <person name="Parke J."/>
            <person name="Coenye T."/>
            <person name="Konstantinidis K."/>
            <person name="Ramette A."/>
            <person name="Tiedje J."/>
            <person name="Richardson P."/>
        </authorList>
    </citation>
    <scope>NUCLEOTIDE SEQUENCE [LARGE SCALE GENOMIC DNA]</scope>
    <source>
        <strain>ATCC BAA-244 / DSM 16087 / CCUG 44356 / LMG 19182 / AMMD</strain>
    </source>
</reference>